<dbReference type="EMBL" id="AL591688">
    <property type="protein sequence ID" value="CAC46074.1"/>
    <property type="molecule type" value="Genomic_DNA"/>
</dbReference>
<dbReference type="RefSeq" id="NP_385601.1">
    <property type="nucleotide sequence ID" value="NC_003047.1"/>
</dbReference>
<dbReference type="RefSeq" id="WP_003534993.1">
    <property type="nucleotide sequence ID" value="NC_003047.1"/>
</dbReference>
<dbReference type="SMR" id="Q92Q55"/>
<dbReference type="EnsemblBacteria" id="CAC46074">
    <property type="protein sequence ID" value="CAC46074"/>
    <property type="gene ID" value="SMc02101"/>
</dbReference>
<dbReference type="GeneID" id="89575819"/>
<dbReference type="KEGG" id="sme:SMc02101"/>
<dbReference type="PATRIC" id="fig|266834.11.peg.2915"/>
<dbReference type="eggNOG" id="COG0052">
    <property type="taxonomic scope" value="Bacteria"/>
</dbReference>
<dbReference type="HOGENOM" id="CLU_040318_2_3_5"/>
<dbReference type="OrthoDB" id="9808036at2"/>
<dbReference type="Proteomes" id="UP000001976">
    <property type="component" value="Chromosome"/>
</dbReference>
<dbReference type="GO" id="GO:0022627">
    <property type="term" value="C:cytosolic small ribosomal subunit"/>
    <property type="evidence" value="ECO:0007669"/>
    <property type="project" value="TreeGrafter"/>
</dbReference>
<dbReference type="GO" id="GO:0003735">
    <property type="term" value="F:structural constituent of ribosome"/>
    <property type="evidence" value="ECO:0007669"/>
    <property type="project" value="InterPro"/>
</dbReference>
<dbReference type="GO" id="GO:0006412">
    <property type="term" value="P:translation"/>
    <property type="evidence" value="ECO:0007669"/>
    <property type="project" value="UniProtKB-UniRule"/>
</dbReference>
<dbReference type="CDD" id="cd01425">
    <property type="entry name" value="RPS2"/>
    <property type="match status" value="1"/>
</dbReference>
<dbReference type="Gene3D" id="3.40.50.10490">
    <property type="entry name" value="Glucose-6-phosphate isomerase like protein, domain 1"/>
    <property type="match status" value="1"/>
</dbReference>
<dbReference type="Gene3D" id="1.10.287.610">
    <property type="entry name" value="Helix hairpin bin"/>
    <property type="match status" value="1"/>
</dbReference>
<dbReference type="HAMAP" id="MF_00291_B">
    <property type="entry name" value="Ribosomal_uS2_B"/>
    <property type="match status" value="1"/>
</dbReference>
<dbReference type="InterPro" id="IPR001865">
    <property type="entry name" value="Ribosomal_uS2"/>
</dbReference>
<dbReference type="InterPro" id="IPR005706">
    <property type="entry name" value="Ribosomal_uS2_bac/mit/plastid"/>
</dbReference>
<dbReference type="InterPro" id="IPR018130">
    <property type="entry name" value="Ribosomal_uS2_CS"/>
</dbReference>
<dbReference type="InterPro" id="IPR023591">
    <property type="entry name" value="Ribosomal_uS2_flav_dom_sf"/>
</dbReference>
<dbReference type="NCBIfam" id="TIGR01011">
    <property type="entry name" value="rpsB_bact"/>
    <property type="match status" value="1"/>
</dbReference>
<dbReference type="PANTHER" id="PTHR12534">
    <property type="entry name" value="30S RIBOSOMAL PROTEIN S2 PROKARYOTIC AND ORGANELLAR"/>
    <property type="match status" value="1"/>
</dbReference>
<dbReference type="PANTHER" id="PTHR12534:SF0">
    <property type="entry name" value="SMALL RIBOSOMAL SUBUNIT PROTEIN US2M"/>
    <property type="match status" value="1"/>
</dbReference>
<dbReference type="Pfam" id="PF00318">
    <property type="entry name" value="Ribosomal_S2"/>
    <property type="match status" value="1"/>
</dbReference>
<dbReference type="PRINTS" id="PR00395">
    <property type="entry name" value="RIBOSOMALS2"/>
</dbReference>
<dbReference type="SUPFAM" id="SSF52313">
    <property type="entry name" value="Ribosomal protein S2"/>
    <property type="match status" value="1"/>
</dbReference>
<dbReference type="PROSITE" id="PS00962">
    <property type="entry name" value="RIBOSOMAL_S2_1"/>
    <property type="match status" value="1"/>
</dbReference>
<dbReference type="PROSITE" id="PS00963">
    <property type="entry name" value="RIBOSOMAL_S2_2"/>
    <property type="match status" value="1"/>
</dbReference>
<name>RS2_RHIME</name>
<sequence>MALPDFTMRQLLEAGVHFGHQTHRWNPKMKPYIFGDRNNVHIIDLAQTVPMLSRALQVVSDTVASGGRVLFVGTKRQASEIIADAAKRSAQYYVNARWLGGMMTNWKTISNSIQRLRKLDEILASEASGFTKKERLNLEREREKLNRALGGIRDMGGTPDLMFIIDTNKESIAIDEAKRLGIPVVAVIDSNCDPDQIDYAIPGNDDASRAIALYCDLIARAAIDGIARQQGASGRDLGASEEVPVEPALEEASEA</sequence>
<protein>
    <recommendedName>
        <fullName evidence="1">Small ribosomal subunit protein uS2</fullName>
    </recommendedName>
    <alternativeName>
        <fullName evidence="3">30S ribosomal protein S2</fullName>
    </alternativeName>
</protein>
<accession>Q92Q55</accession>
<comment type="similarity">
    <text evidence="1">Belongs to the universal ribosomal protein uS2 family.</text>
</comment>
<organism>
    <name type="scientific">Rhizobium meliloti (strain 1021)</name>
    <name type="common">Ensifer meliloti</name>
    <name type="synonym">Sinorhizobium meliloti</name>
    <dbReference type="NCBI Taxonomy" id="266834"/>
    <lineage>
        <taxon>Bacteria</taxon>
        <taxon>Pseudomonadati</taxon>
        <taxon>Pseudomonadota</taxon>
        <taxon>Alphaproteobacteria</taxon>
        <taxon>Hyphomicrobiales</taxon>
        <taxon>Rhizobiaceae</taxon>
        <taxon>Sinorhizobium/Ensifer group</taxon>
        <taxon>Sinorhizobium</taxon>
    </lineage>
</organism>
<keyword id="KW-1185">Reference proteome</keyword>
<keyword id="KW-0687">Ribonucleoprotein</keyword>
<keyword id="KW-0689">Ribosomal protein</keyword>
<gene>
    <name evidence="1" type="primary">rpsB</name>
    <name type="ordered locus">R01495</name>
    <name type="ORF">SMc02101</name>
</gene>
<evidence type="ECO:0000255" key="1">
    <source>
        <dbReference type="HAMAP-Rule" id="MF_00291"/>
    </source>
</evidence>
<evidence type="ECO:0000256" key="2">
    <source>
        <dbReference type="SAM" id="MobiDB-lite"/>
    </source>
</evidence>
<evidence type="ECO:0000305" key="3"/>
<feature type="chain" id="PRO_0000134225" description="Small ribosomal subunit protein uS2">
    <location>
        <begin position="1"/>
        <end position="255"/>
    </location>
</feature>
<feature type="region of interest" description="Disordered" evidence="2">
    <location>
        <begin position="232"/>
        <end position="255"/>
    </location>
</feature>
<proteinExistence type="inferred from homology"/>
<reference key="1">
    <citation type="journal article" date="2001" name="Proc. Natl. Acad. Sci. U.S.A.">
        <title>Analysis of the chromosome sequence of the legume symbiont Sinorhizobium meliloti strain 1021.</title>
        <authorList>
            <person name="Capela D."/>
            <person name="Barloy-Hubler F."/>
            <person name="Gouzy J."/>
            <person name="Bothe G."/>
            <person name="Ampe F."/>
            <person name="Batut J."/>
            <person name="Boistard P."/>
            <person name="Becker A."/>
            <person name="Boutry M."/>
            <person name="Cadieu E."/>
            <person name="Dreano S."/>
            <person name="Gloux S."/>
            <person name="Godrie T."/>
            <person name="Goffeau A."/>
            <person name="Kahn D."/>
            <person name="Kiss E."/>
            <person name="Lelaure V."/>
            <person name="Masuy D."/>
            <person name="Pohl T."/>
            <person name="Portetelle D."/>
            <person name="Puehler A."/>
            <person name="Purnelle B."/>
            <person name="Ramsperger U."/>
            <person name="Renard C."/>
            <person name="Thebault P."/>
            <person name="Vandenbol M."/>
            <person name="Weidner S."/>
            <person name="Galibert F."/>
        </authorList>
    </citation>
    <scope>NUCLEOTIDE SEQUENCE [LARGE SCALE GENOMIC DNA]</scope>
    <source>
        <strain>1021</strain>
    </source>
</reference>
<reference key="2">
    <citation type="journal article" date="2001" name="Science">
        <title>The composite genome of the legume symbiont Sinorhizobium meliloti.</title>
        <authorList>
            <person name="Galibert F."/>
            <person name="Finan T.M."/>
            <person name="Long S.R."/>
            <person name="Puehler A."/>
            <person name="Abola P."/>
            <person name="Ampe F."/>
            <person name="Barloy-Hubler F."/>
            <person name="Barnett M.J."/>
            <person name="Becker A."/>
            <person name="Boistard P."/>
            <person name="Bothe G."/>
            <person name="Boutry M."/>
            <person name="Bowser L."/>
            <person name="Buhrmester J."/>
            <person name="Cadieu E."/>
            <person name="Capela D."/>
            <person name="Chain P."/>
            <person name="Cowie A."/>
            <person name="Davis R.W."/>
            <person name="Dreano S."/>
            <person name="Federspiel N.A."/>
            <person name="Fisher R.F."/>
            <person name="Gloux S."/>
            <person name="Godrie T."/>
            <person name="Goffeau A."/>
            <person name="Golding B."/>
            <person name="Gouzy J."/>
            <person name="Gurjal M."/>
            <person name="Hernandez-Lucas I."/>
            <person name="Hong A."/>
            <person name="Huizar L."/>
            <person name="Hyman R.W."/>
            <person name="Jones T."/>
            <person name="Kahn D."/>
            <person name="Kahn M.L."/>
            <person name="Kalman S."/>
            <person name="Keating D.H."/>
            <person name="Kiss E."/>
            <person name="Komp C."/>
            <person name="Lelaure V."/>
            <person name="Masuy D."/>
            <person name="Palm C."/>
            <person name="Peck M.C."/>
            <person name="Pohl T.M."/>
            <person name="Portetelle D."/>
            <person name="Purnelle B."/>
            <person name="Ramsperger U."/>
            <person name="Surzycki R."/>
            <person name="Thebault P."/>
            <person name="Vandenbol M."/>
            <person name="Vorhoelter F.J."/>
            <person name="Weidner S."/>
            <person name="Wells D.H."/>
            <person name="Wong K."/>
            <person name="Yeh K.-C."/>
            <person name="Batut J."/>
        </authorList>
    </citation>
    <scope>NUCLEOTIDE SEQUENCE [LARGE SCALE GENOMIC DNA]</scope>
    <source>
        <strain>1021</strain>
    </source>
</reference>